<proteinExistence type="evidence at protein level"/>
<gene>
    <name type="primary">Mcm9</name>
    <name type="synonym">Mcmdc1</name>
</gene>
<name>MCM9_MOUSE</name>
<sequence>MNSEQVTLVGQVFESYVSEYHKNDILLILKERDEDAHYPVVVNAMSLFETNMEIGDYFTVFPNEVLTVFDSALRRSALAILQSLPETEGLSMKQNLHARISGLPVCPELVREHIPKTKDVGHFLSVTGTVIRTSLVKVLEFERDYMCNKCKHVFMVEADFEQYYTFSRPSSCPSLASCDSSKFSCLSDLSSSPARCRDYQEIKIQEQVQRLSVGSIPRSMKVILEDDLVDSCKSGDDLTIYGVVMQRWKPFQRDVRCEVEIVLKANYVQVNNEQSSGMVMDEDTRKEFEDFWEHYKSDPFAGRNEILASLCPQVFGMYLVKLAVAMVLAGGIQRTDAAGTRVRGESHLLLVGDPGTGKSQFLKYAAKITPRSVLTTGIGSTSAGLTVTAVKDSGEWNLEAGALVLADAGLCCIDEFNSLKEHDRTSIHEAMEQQTISVAKAGLVCKLNTRTTILAATNPKGQYDPKESVSVNIALGSPLLSRFDLVLVLLDTRNEDWDRIISSFILENKGYPSKSENLWSMEKMKTYFCLIRNLHPTLSEVSNQVLLRYYQMQRQSDSRNAARTTIRLLESLIRLAEAHARLMFRSAVTLEDAVTAVSVMESSMQGGALLGGVNALHTSFPENPRAQYQRQCELILEKLELQGLLQEELRRLERLQNESVHQCQSHSLEEEVAPGSCRNDPRDKPRLRTSTQQEQSCSWSSTERSGADSPPGPGLNRPTSCNNSAENRDGRGDGLDWLDPTSSPEIAPESTIVSPNVKTTEKNVNLKISNNKSQGKEKHGPQQRSKLLEAGHLPSSGAMNAPLRSHGVKRTKASQAVVVSEAGRGDEEDSVPRRLPKLLKEGSQNVCRSTTRVRPLPPTVPLSLSIPSPGSGKRSGTPKRKRRKSAQVEEPEPEGMETPTVKLAKFTFKQKTKLTHSPEGQGPIPPSASEIAVDSSKIPQQRTRREAAVPVVAPGKSTSTSGDRCSDQLHGKTKELSRQPPDSNPPREEREQGPKRRVIQPKPELGNQAGHSHLACEKDRKEGVSCGNKSSKVHAGTIARLASFSFTSPSESKSESLPPERKDSRDSRDSRDSRDRCHSPPATTAPVLGQQRQTFQLQQPTERANLSTLSLFTLSELDDEALDFDWEEEMRKKP</sequence>
<protein>
    <recommendedName>
        <fullName>DNA helicase MCM9</fullName>
        <ecNumber evidence="1">3.6.4.12</ecNumber>
    </recommendedName>
    <alternativeName>
        <fullName>Mini-chromosome maintenance deficient domain-containing protein 1</fullName>
    </alternativeName>
    <alternativeName>
        <fullName>Minichromosome maintenance 9</fullName>
    </alternativeName>
</protein>
<reference key="1">
    <citation type="journal article" date="2009" name="PLoS Biol.">
        <title>Lineage-specific biology revealed by a finished genome assembly of the mouse.</title>
        <authorList>
            <person name="Church D.M."/>
            <person name="Goodstadt L."/>
            <person name="Hillier L.W."/>
            <person name="Zody M.C."/>
            <person name="Goldstein S."/>
            <person name="She X."/>
            <person name="Bult C.J."/>
            <person name="Agarwala R."/>
            <person name="Cherry J.L."/>
            <person name="DiCuccio M."/>
            <person name="Hlavina W."/>
            <person name="Kapustin Y."/>
            <person name="Meric P."/>
            <person name="Maglott D."/>
            <person name="Birtle Z."/>
            <person name="Marques A.C."/>
            <person name="Graves T."/>
            <person name="Zhou S."/>
            <person name="Teague B."/>
            <person name="Potamousis K."/>
            <person name="Churas C."/>
            <person name="Place M."/>
            <person name="Herschleb J."/>
            <person name="Runnheim R."/>
            <person name="Forrest D."/>
            <person name="Amos-Landgraf J."/>
            <person name="Schwartz D.C."/>
            <person name="Cheng Z."/>
            <person name="Lindblad-Toh K."/>
            <person name="Eichler E.E."/>
            <person name="Ponting C.P."/>
        </authorList>
    </citation>
    <scope>NUCLEOTIDE SEQUENCE [LARGE SCALE GENOMIC DNA]</scope>
    <source>
        <strain>C57BL/6J</strain>
    </source>
</reference>
<reference key="2">
    <citation type="journal article" date="2004" name="Genome Res.">
        <title>The status, quality, and expansion of the NIH full-length cDNA project: the Mammalian Gene Collection (MGC).</title>
        <authorList>
            <consortium name="The MGC Project Team"/>
        </authorList>
    </citation>
    <scope>NUCLEOTIDE SEQUENCE [LARGE SCALE MRNA] OF 486-1134 (ISOFORMS 1/2)</scope>
    <source>
        <tissue>Limb</tissue>
    </source>
</reference>
<reference key="3">
    <citation type="journal article" date="2005" name="Science">
        <title>The transcriptional landscape of the mammalian genome.</title>
        <authorList>
            <person name="Carninci P."/>
            <person name="Kasukawa T."/>
            <person name="Katayama S."/>
            <person name="Gough J."/>
            <person name="Frith M.C."/>
            <person name="Maeda N."/>
            <person name="Oyama R."/>
            <person name="Ravasi T."/>
            <person name="Lenhard B."/>
            <person name="Wells C."/>
            <person name="Kodzius R."/>
            <person name="Shimokawa K."/>
            <person name="Bajic V.B."/>
            <person name="Brenner S.E."/>
            <person name="Batalov S."/>
            <person name="Forrest A.R."/>
            <person name="Zavolan M."/>
            <person name="Davis M.J."/>
            <person name="Wilming L.G."/>
            <person name="Aidinis V."/>
            <person name="Allen J.E."/>
            <person name="Ambesi-Impiombato A."/>
            <person name="Apweiler R."/>
            <person name="Aturaliya R.N."/>
            <person name="Bailey T.L."/>
            <person name="Bansal M."/>
            <person name="Baxter L."/>
            <person name="Beisel K.W."/>
            <person name="Bersano T."/>
            <person name="Bono H."/>
            <person name="Chalk A.M."/>
            <person name="Chiu K.P."/>
            <person name="Choudhary V."/>
            <person name="Christoffels A."/>
            <person name="Clutterbuck D.R."/>
            <person name="Crowe M.L."/>
            <person name="Dalla E."/>
            <person name="Dalrymple B.P."/>
            <person name="de Bono B."/>
            <person name="Della Gatta G."/>
            <person name="di Bernardo D."/>
            <person name="Down T."/>
            <person name="Engstrom P."/>
            <person name="Fagiolini M."/>
            <person name="Faulkner G."/>
            <person name="Fletcher C.F."/>
            <person name="Fukushima T."/>
            <person name="Furuno M."/>
            <person name="Futaki S."/>
            <person name="Gariboldi M."/>
            <person name="Georgii-Hemming P."/>
            <person name="Gingeras T.R."/>
            <person name="Gojobori T."/>
            <person name="Green R.E."/>
            <person name="Gustincich S."/>
            <person name="Harbers M."/>
            <person name="Hayashi Y."/>
            <person name="Hensch T.K."/>
            <person name="Hirokawa N."/>
            <person name="Hill D."/>
            <person name="Huminiecki L."/>
            <person name="Iacono M."/>
            <person name="Ikeo K."/>
            <person name="Iwama A."/>
            <person name="Ishikawa T."/>
            <person name="Jakt M."/>
            <person name="Kanapin A."/>
            <person name="Katoh M."/>
            <person name="Kawasawa Y."/>
            <person name="Kelso J."/>
            <person name="Kitamura H."/>
            <person name="Kitano H."/>
            <person name="Kollias G."/>
            <person name="Krishnan S.P."/>
            <person name="Kruger A."/>
            <person name="Kummerfeld S.K."/>
            <person name="Kurochkin I.V."/>
            <person name="Lareau L.F."/>
            <person name="Lazarevic D."/>
            <person name="Lipovich L."/>
            <person name="Liu J."/>
            <person name="Liuni S."/>
            <person name="McWilliam S."/>
            <person name="Madan Babu M."/>
            <person name="Madera M."/>
            <person name="Marchionni L."/>
            <person name="Matsuda H."/>
            <person name="Matsuzawa S."/>
            <person name="Miki H."/>
            <person name="Mignone F."/>
            <person name="Miyake S."/>
            <person name="Morris K."/>
            <person name="Mottagui-Tabar S."/>
            <person name="Mulder N."/>
            <person name="Nakano N."/>
            <person name="Nakauchi H."/>
            <person name="Ng P."/>
            <person name="Nilsson R."/>
            <person name="Nishiguchi S."/>
            <person name="Nishikawa S."/>
            <person name="Nori F."/>
            <person name="Ohara O."/>
            <person name="Okazaki Y."/>
            <person name="Orlando V."/>
            <person name="Pang K.C."/>
            <person name="Pavan W.J."/>
            <person name="Pavesi G."/>
            <person name="Pesole G."/>
            <person name="Petrovsky N."/>
            <person name="Piazza S."/>
            <person name="Reed J."/>
            <person name="Reid J.F."/>
            <person name="Ring B.Z."/>
            <person name="Ringwald M."/>
            <person name="Rost B."/>
            <person name="Ruan Y."/>
            <person name="Salzberg S.L."/>
            <person name="Sandelin A."/>
            <person name="Schneider C."/>
            <person name="Schoenbach C."/>
            <person name="Sekiguchi K."/>
            <person name="Semple C.A."/>
            <person name="Seno S."/>
            <person name="Sessa L."/>
            <person name="Sheng Y."/>
            <person name="Shibata Y."/>
            <person name="Shimada H."/>
            <person name="Shimada K."/>
            <person name="Silva D."/>
            <person name="Sinclair B."/>
            <person name="Sperling S."/>
            <person name="Stupka E."/>
            <person name="Sugiura K."/>
            <person name="Sultana R."/>
            <person name="Takenaka Y."/>
            <person name="Taki K."/>
            <person name="Tammoja K."/>
            <person name="Tan S.L."/>
            <person name="Tang S."/>
            <person name="Taylor M.S."/>
            <person name="Tegner J."/>
            <person name="Teichmann S.A."/>
            <person name="Ueda H.R."/>
            <person name="van Nimwegen E."/>
            <person name="Verardo R."/>
            <person name="Wei C.L."/>
            <person name="Yagi K."/>
            <person name="Yamanishi H."/>
            <person name="Zabarovsky E."/>
            <person name="Zhu S."/>
            <person name="Zimmer A."/>
            <person name="Hide W."/>
            <person name="Bult C."/>
            <person name="Grimmond S.M."/>
            <person name="Teasdale R.D."/>
            <person name="Liu E.T."/>
            <person name="Brusic V."/>
            <person name="Quackenbush J."/>
            <person name="Wahlestedt C."/>
            <person name="Mattick J.S."/>
            <person name="Hume D.A."/>
            <person name="Kai C."/>
            <person name="Sasaki D."/>
            <person name="Tomaru Y."/>
            <person name="Fukuda S."/>
            <person name="Kanamori-Katayama M."/>
            <person name="Suzuki M."/>
            <person name="Aoki J."/>
            <person name="Arakawa T."/>
            <person name="Iida J."/>
            <person name="Imamura K."/>
            <person name="Itoh M."/>
            <person name="Kato T."/>
            <person name="Kawaji H."/>
            <person name="Kawagashira N."/>
            <person name="Kawashima T."/>
            <person name="Kojima M."/>
            <person name="Kondo S."/>
            <person name="Konno H."/>
            <person name="Nakano K."/>
            <person name="Ninomiya N."/>
            <person name="Nishio T."/>
            <person name="Okada M."/>
            <person name="Plessy C."/>
            <person name="Shibata K."/>
            <person name="Shiraki T."/>
            <person name="Suzuki S."/>
            <person name="Tagami M."/>
            <person name="Waki K."/>
            <person name="Watahiki A."/>
            <person name="Okamura-Oho Y."/>
            <person name="Suzuki H."/>
            <person name="Kawai J."/>
            <person name="Hayashizaki Y."/>
        </authorList>
    </citation>
    <scope>PARTIAL NUCLEOTIDE SEQUENCE [LARGE SCALE MRNA] (ISOFORM 3)</scope>
    <source>
        <strain>C57BL/6J</strain>
        <tissue>Adipose tissue</tissue>
        <tissue>Colon</tissue>
    </source>
</reference>
<reference key="4">
    <citation type="journal article" date="2005" name="Gene">
        <title>Identification of full genes and proteins of MCM9, a novel, vertebrate-specific member of the MCM2-8 protein family.</title>
        <authorList>
            <person name="Lutzmann M."/>
            <person name="Maiorano D."/>
            <person name="Mechali M."/>
        </authorList>
    </citation>
    <scope>IDENTIFICATION</scope>
</reference>
<reference key="5">
    <citation type="journal article" date="2005" name="Biochem. Biophys. Res. Commun.">
        <title>Identification of a novel cell-cycle-induced MCM family protein MCM9.</title>
        <authorList>
            <person name="Yoshida K."/>
        </authorList>
    </citation>
    <scope>IDENTIFICATION</scope>
    <scope>INDUCTION</scope>
</reference>
<reference key="6">
    <citation type="journal article" date="2011" name="Proc. Natl. Acad. Sci. U.S.A.">
        <title>Minichromosome maintenance helicase paralog MCM9 is dispensible for DNA replication but functions in germ-line stem cells and tumor suppression.</title>
        <authorList>
            <person name="Hartford S.A."/>
            <person name="Luo Y."/>
            <person name="Southard T.L."/>
            <person name="Min I.M."/>
            <person name="Lis J.T."/>
            <person name="Schimenti J.C."/>
        </authorList>
    </citation>
    <scope>FUNCTION</scope>
    <scope>ALTERNATIVE SPLICING (ISOFORMS 1 AND 3)</scope>
    <scope>TISSUE SPECIFICITY</scope>
    <scope>DEVELOPMENTAL STAGE</scope>
    <scope>DISRUPTION PHENOTYPE</scope>
</reference>
<reference key="7">
    <citation type="journal article" date="2012" name="Mol. Cell">
        <title>MCM8- and MCM9-deficient mice reveal gametogenesis defects and genome instability due to impaired homologous recombination.</title>
        <authorList>
            <person name="Lutzmann M."/>
            <person name="Grey C."/>
            <person name="Traver S."/>
            <person name="Ganier O."/>
            <person name="Maya-Mendoza A."/>
            <person name="Ranisavljevic N."/>
            <person name="Bernex F."/>
            <person name="Nishiyama A."/>
            <person name="Montel N."/>
            <person name="Gavois E."/>
            <person name="Forichon L."/>
            <person name="de Massy B."/>
            <person name="Mechali M."/>
        </authorList>
    </citation>
    <scope>FUNCTION</scope>
    <scope>IDENTIFICATION IN THE MCM8-MCM9 COMPLEX</scope>
    <scope>DISRUPTION PHENOTYPE</scope>
</reference>
<reference key="8">
    <citation type="journal article" date="2013" name="Mol. Cell. Biol.">
        <title>The MCM8-MCM9 complex promotes RAD51 recruitment at DNA damage sites to facilitate homologous recombination.</title>
        <authorList>
            <person name="Park J."/>
            <person name="Long D.T."/>
            <person name="Lee K.Y."/>
            <person name="Abbas T."/>
            <person name="Shibata E."/>
            <person name="Negishi M."/>
            <person name="Luo Y."/>
            <person name="Schimenti J.C."/>
            <person name="Gambus A."/>
            <person name="Walter J.C."/>
            <person name="Dutta A."/>
        </authorList>
    </citation>
    <scope>FUNCTION</scope>
    <scope>SUBCELLULAR LOCATION</scope>
</reference>
<reference key="9">
    <citation type="journal article" date="2015" name="Mol. Cell">
        <title>MCM9 Is Required for Mammalian DNA Mismatch Repair.</title>
        <authorList>
            <person name="Traver S."/>
            <person name="Coulombe P."/>
            <person name="Peiffer I."/>
            <person name="Hutchins J.R."/>
            <person name="Kitzmann M."/>
            <person name="Latreille D."/>
            <person name="Mechali M."/>
        </authorList>
    </citation>
    <scope>FUNCTION</scope>
</reference>
<evidence type="ECO:0000250" key="1">
    <source>
        <dbReference type="UniProtKB" id="Q9NXL9"/>
    </source>
</evidence>
<evidence type="ECO:0000255" key="2"/>
<evidence type="ECO:0000256" key="3">
    <source>
        <dbReference type="SAM" id="MobiDB-lite"/>
    </source>
</evidence>
<evidence type="ECO:0000269" key="4">
    <source>
    </source>
</evidence>
<evidence type="ECO:0000269" key="5">
    <source>
    </source>
</evidence>
<evidence type="ECO:0000269" key="6">
    <source>
    </source>
</evidence>
<evidence type="ECO:0000269" key="7">
    <source>
    </source>
</evidence>
<evidence type="ECO:0000303" key="8">
    <source>
    </source>
</evidence>
<evidence type="ECO:0000305" key="9"/>
<comment type="function">
    <text evidence="1 4 5 6 7">Component of the MCM8-MCM9 complex, a complex involved in the repair of double-stranded DNA breaks (DBSs) and DNA interstrand cross-links (ICLs) by homologous recombination (HR) (PubMed:22771120, PubMed:23401855). Required for DNA resection by the MRE11-RAD50-NBN/NBS1 (MRN) complex at double-stranded DNA breaks to generate ssDNA by recruiting the MRN complex to the repair site and by promoting the complex nuclease activity (By similarity). Probably by regulating the localization of the MNR complex, indirectly regulates the recruitment of downstream effector RAD51 to DNA damage sites including DBSs and ICLs (PubMed:22771120, PubMed:23401855). Acts as a helicase in DNA mismatch repair (MMR) following DNA replication errors to unwind the mismatch containing DNA strand (PubMed:22771120, PubMed:26300262). In addition, recruits MLH1, a component of the MMR complex, to chromatin (By similarity). The MCM8-MCM9 complex is dispensable for DNA replication and S phase progression (PubMed:21987787). Probably by regulating HR, plays a key role during gametogenesis (PubMed:21987787, PubMed:22771120).</text>
</comment>
<comment type="catalytic activity">
    <reaction evidence="1">
        <text>ATP + H2O = ADP + phosphate + H(+)</text>
        <dbReference type="Rhea" id="RHEA:13065"/>
        <dbReference type="ChEBI" id="CHEBI:15377"/>
        <dbReference type="ChEBI" id="CHEBI:15378"/>
        <dbReference type="ChEBI" id="CHEBI:30616"/>
        <dbReference type="ChEBI" id="CHEBI:43474"/>
        <dbReference type="ChEBI" id="CHEBI:456216"/>
        <dbReference type="EC" id="3.6.4.12"/>
    </reaction>
</comment>
<comment type="subunit">
    <text evidence="1 5">Component of the MCM8-MCM9 complex, which forms a hexamer composed of MCM8 and MCM9 (PubMed:22771120). Interacts with the DNA mismatch repair (MMR) complex composed at least of MSH2, MSH3, MSH6, PMS1 and MLH1 (By similarity). Interacts with MLH1; the interaction recruits MLH1 to chromatin (By similarity). Interacts with MSH2; the interaction recruits MCM9 to chromatin (By similarity). Interacts with MSH6 (By similarity). Interacts with the MRN complex composed of MRE11, RAD50 and NBN/NBS1; the interaction recruits the MRN complex to DNA damage sites (By similarity). Interacts with RAD51; the interaction recruits RAD51 to DNA damage sites (By similarity).</text>
</comment>
<comment type="subcellular location">
    <subcellularLocation>
        <location evidence="6">Nucleus</location>
    </subcellularLocation>
    <subcellularLocation>
        <location evidence="6">Chromosome</location>
    </subcellularLocation>
    <text evidence="1 6">Colocalizes to nuclear foci with RPA1 following DNA damage (PubMed:23401855). Localizes to double-stranded DNA breaks (By similarity). Recruited to chromatin by MSH2 (By similarity).</text>
</comment>
<comment type="alternative products">
    <event type="alternative splicing"/>
    <isoform>
        <id>Q2KHI9-1</id>
        <name>1</name>
        <name evidence="8">Mcm9(L)</name>
        <sequence type="displayed"/>
    </isoform>
    <isoform>
        <id>Q2KHI9-2</id>
        <name>2</name>
        <sequence type="described" ref="VSP_028015"/>
    </isoform>
    <isoform>
        <id>Q2KHI9-3</id>
        <name>3</name>
        <name evidence="8">Mcm9(S)</name>
        <sequence type="described" ref="VSP_028016 VSP_028017"/>
    </isoform>
</comment>
<comment type="tissue specificity">
    <text evidence="4">Ubiquitously expressed.</text>
</comment>
<comment type="developmental stage">
    <text evidence="4">Expressed in embryos and adults.</text>
</comment>
<comment type="induction">
    <text evidence="5">By E2F1 and serum stimulation.</text>
</comment>
<comment type="disruption phenotype">
    <text evidence="4 5">Females are viable but are sterile due to defects in double-strand break repair during gametogenesis. Males are not sterile and produce spermatozoa, but in much reduced quantity. Female ovaries are completely devoid of oocytes, and testes show a severe early proliferation defect of germ cells, causing a retarded development of only a fraction of seminiferous tubules that produce then apparently normal spermatozoa.</text>
</comment>
<comment type="miscellaneous">
    <molecule>Isoform 3</molecule>
    <text evidence="9">Incomplete sequence.</text>
</comment>
<comment type="similarity">
    <text evidence="9">Belongs to the MCM family.</text>
</comment>
<dbReference type="EC" id="3.6.4.12" evidence="1"/>
<dbReference type="EMBL" id="AC153949">
    <property type="status" value="NOT_ANNOTATED_CDS"/>
    <property type="molecule type" value="Genomic_DNA"/>
</dbReference>
<dbReference type="EMBL" id="AC155941">
    <property type="status" value="NOT_ANNOTATED_CDS"/>
    <property type="molecule type" value="Genomic_DNA"/>
</dbReference>
<dbReference type="EMBL" id="BC062185">
    <property type="protein sequence ID" value="AAH62185.2"/>
    <property type="molecule type" value="mRNA"/>
</dbReference>
<dbReference type="EMBL" id="AK018494">
    <property type="protein sequence ID" value="BAB31238.1"/>
    <property type="molecule type" value="mRNA"/>
</dbReference>
<dbReference type="EMBL" id="AK046636">
    <property type="protein sequence ID" value="BAE20656.1"/>
    <property type="molecule type" value="mRNA"/>
</dbReference>
<dbReference type="EMBL" id="BN000883">
    <property type="protein sequence ID" value="CAJ70649.1"/>
    <property type="molecule type" value="mRNA"/>
</dbReference>
<dbReference type="CCDS" id="CCDS23846.2">
    <molecule id="Q2KHI9-1"/>
</dbReference>
<dbReference type="RefSeq" id="NP_082106.3">
    <molecule id="Q2KHI9-1"/>
    <property type="nucleotide sequence ID" value="NM_027830.3"/>
</dbReference>
<dbReference type="RefSeq" id="XP_017169586.1">
    <property type="nucleotide sequence ID" value="XM_017314097.1"/>
</dbReference>
<dbReference type="SMR" id="Q2KHI9"/>
<dbReference type="FunCoup" id="Q2KHI9">
    <property type="interactions" value="1938"/>
</dbReference>
<dbReference type="STRING" id="10090.ENSMUSP00000074978"/>
<dbReference type="GlyGen" id="Q2KHI9">
    <property type="glycosylation" value="1 site, 1 O-linked glycan (1 site)"/>
</dbReference>
<dbReference type="iPTMnet" id="Q2KHI9"/>
<dbReference type="PhosphoSitePlus" id="Q2KHI9"/>
<dbReference type="jPOST" id="Q2KHI9"/>
<dbReference type="PaxDb" id="10090-ENSMUSP00000074978"/>
<dbReference type="PeptideAtlas" id="Q2KHI9"/>
<dbReference type="ProteomicsDB" id="292277">
    <molecule id="Q2KHI9-1"/>
</dbReference>
<dbReference type="ProteomicsDB" id="292278">
    <molecule id="Q2KHI9-2"/>
</dbReference>
<dbReference type="ProteomicsDB" id="292279">
    <molecule id="Q2KHI9-3"/>
</dbReference>
<dbReference type="Antibodypedia" id="34788">
    <property type="antibodies" value="89 antibodies from 25 providers"/>
</dbReference>
<dbReference type="Ensembl" id="ENSMUST00000075540.8">
    <molecule id="Q2KHI9-2"/>
    <property type="protein sequence ID" value="ENSMUSP00000074978.6"/>
    <property type="gene ID" value="ENSMUSG00000058298.11"/>
</dbReference>
<dbReference type="Ensembl" id="ENSMUST00000219838.3">
    <molecule id="Q2KHI9-3"/>
    <property type="protein sequence ID" value="ENSMUSP00000151639.3"/>
    <property type="gene ID" value="ENSMUSG00000058298.11"/>
</dbReference>
<dbReference type="Ensembl" id="ENSMUST00000237608.2">
    <molecule id="Q2KHI9-1"/>
    <property type="protein sequence ID" value="ENSMUSP00000157761.2"/>
    <property type="gene ID" value="ENSMUSG00000058298.11"/>
</dbReference>
<dbReference type="GeneID" id="71567"/>
<dbReference type="KEGG" id="mmu:71567"/>
<dbReference type="UCSC" id="uc007fbq.1">
    <molecule id="Q2KHI9-2"/>
    <property type="organism name" value="mouse"/>
</dbReference>
<dbReference type="UCSC" id="uc007fbs.1">
    <molecule id="Q2KHI9-3"/>
    <property type="organism name" value="mouse"/>
</dbReference>
<dbReference type="AGR" id="MGI:1918817"/>
<dbReference type="CTD" id="254394"/>
<dbReference type="MGI" id="MGI:1918817">
    <property type="gene designation" value="Mcm9"/>
</dbReference>
<dbReference type="VEuPathDB" id="HostDB:ENSMUSG00000058298"/>
<dbReference type="eggNOG" id="KOG0477">
    <property type="taxonomic scope" value="Eukaryota"/>
</dbReference>
<dbReference type="GeneTree" id="ENSGT01110000267230"/>
<dbReference type="HOGENOM" id="CLU_000995_7_2_1"/>
<dbReference type="InParanoid" id="Q2KHI9"/>
<dbReference type="OMA" id="VRQPTSC"/>
<dbReference type="PhylomeDB" id="Q2KHI9"/>
<dbReference type="TreeFam" id="TF329421"/>
<dbReference type="BioGRID-ORCS" id="71567">
    <property type="hits" value="24 hits in 114 CRISPR screens"/>
</dbReference>
<dbReference type="ChiTaRS" id="Mcm9">
    <property type="organism name" value="mouse"/>
</dbReference>
<dbReference type="PRO" id="PR:Q2KHI9"/>
<dbReference type="Proteomes" id="UP000000589">
    <property type="component" value="Chromosome 10"/>
</dbReference>
<dbReference type="RNAct" id="Q2KHI9">
    <property type="molecule type" value="protein"/>
</dbReference>
<dbReference type="Bgee" id="ENSMUSG00000058298">
    <property type="expression patterns" value="Expressed in animal zygote and 164 other cell types or tissues"/>
</dbReference>
<dbReference type="ExpressionAtlas" id="Q2KHI9">
    <property type="expression patterns" value="baseline and differential"/>
</dbReference>
<dbReference type="GO" id="GO:0005694">
    <property type="term" value="C:chromosome"/>
    <property type="evidence" value="ECO:0007669"/>
    <property type="project" value="UniProtKB-SubCell"/>
</dbReference>
<dbReference type="GO" id="GO:0097362">
    <property type="term" value="C:MCM8-MCM9 complex"/>
    <property type="evidence" value="ECO:0000314"/>
    <property type="project" value="UniProtKB"/>
</dbReference>
<dbReference type="GO" id="GO:0005634">
    <property type="term" value="C:nucleus"/>
    <property type="evidence" value="ECO:0007669"/>
    <property type="project" value="UniProtKB-SubCell"/>
</dbReference>
<dbReference type="GO" id="GO:0005524">
    <property type="term" value="F:ATP binding"/>
    <property type="evidence" value="ECO:0007669"/>
    <property type="project" value="UniProtKB-KW"/>
</dbReference>
<dbReference type="GO" id="GO:0016887">
    <property type="term" value="F:ATP hydrolysis activity"/>
    <property type="evidence" value="ECO:0007669"/>
    <property type="project" value="InterPro"/>
</dbReference>
<dbReference type="GO" id="GO:0003682">
    <property type="term" value="F:chromatin binding"/>
    <property type="evidence" value="ECO:0000314"/>
    <property type="project" value="UniProtKB"/>
</dbReference>
<dbReference type="GO" id="GO:0003677">
    <property type="term" value="F:DNA binding"/>
    <property type="evidence" value="ECO:0007669"/>
    <property type="project" value="UniProtKB-KW"/>
</dbReference>
<dbReference type="GO" id="GO:0003678">
    <property type="term" value="F:DNA helicase activity"/>
    <property type="evidence" value="ECO:0007669"/>
    <property type="project" value="Ensembl"/>
</dbReference>
<dbReference type="GO" id="GO:0019899">
    <property type="term" value="F:enzyme binding"/>
    <property type="evidence" value="ECO:0007669"/>
    <property type="project" value="Ensembl"/>
</dbReference>
<dbReference type="GO" id="GO:0032406">
    <property type="term" value="F:MutLbeta complex binding"/>
    <property type="evidence" value="ECO:0007669"/>
    <property type="project" value="Ensembl"/>
</dbReference>
<dbReference type="GO" id="GO:0032407">
    <property type="term" value="F:MutSalpha complex binding"/>
    <property type="evidence" value="ECO:0007669"/>
    <property type="project" value="Ensembl"/>
</dbReference>
<dbReference type="GO" id="GO:0032408">
    <property type="term" value="F:MutSbeta complex binding"/>
    <property type="evidence" value="ECO:0007669"/>
    <property type="project" value="Ensembl"/>
</dbReference>
<dbReference type="GO" id="GO:0006974">
    <property type="term" value="P:DNA damage response"/>
    <property type="evidence" value="ECO:0000315"/>
    <property type="project" value="UniProtKB"/>
</dbReference>
<dbReference type="GO" id="GO:0000724">
    <property type="term" value="P:double-strand break repair via homologous recombination"/>
    <property type="evidence" value="ECO:0000315"/>
    <property type="project" value="UniProtKB"/>
</dbReference>
<dbReference type="GO" id="GO:0007292">
    <property type="term" value="P:female gamete generation"/>
    <property type="evidence" value="ECO:0000315"/>
    <property type="project" value="UniProtKB"/>
</dbReference>
<dbReference type="GO" id="GO:0007276">
    <property type="term" value="P:gamete generation"/>
    <property type="evidence" value="ECO:0000315"/>
    <property type="project" value="UniProtKB"/>
</dbReference>
<dbReference type="GO" id="GO:0070716">
    <property type="term" value="P:mismatch repair involved in maintenance of fidelity involved in DNA-dependent DNA replication"/>
    <property type="evidence" value="ECO:0000315"/>
    <property type="project" value="UniProtKB"/>
</dbReference>
<dbReference type="GO" id="GO:0071168">
    <property type="term" value="P:protein localization to chromatin"/>
    <property type="evidence" value="ECO:0007669"/>
    <property type="project" value="Ensembl"/>
</dbReference>
<dbReference type="GO" id="GO:0036298">
    <property type="term" value="P:recombinational interstrand cross-link repair"/>
    <property type="evidence" value="ECO:0000315"/>
    <property type="project" value="UniProtKB"/>
</dbReference>
<dbReference type="CDD" id="cd17760">
    <property type="entry name" value="MCM9"/>
    <property type="match status" value="1"/>
</dbReference>
<dbReference type="FunFam" id="3.40.50.300:FF:000671">
    <property type="entry name" value="DNA helicase MCM9 isoform X1"/>
    <property type="match status" value="1"/>
</dbReference>
<dbReference type="FunFam" id="2.40.50.140:FF:000120">
    <property type="entry name" value="Probable DNA helicase MCM9"/>
    <property type="match status" value="1"/>
</dbReference>
<dbReference type="Gene3D" id="2.40.50.140">
    <property type="entry name" value="Nucleic acid-binding proteins"/>
    <property type="match status" value="1"/>
</dbReference>
<dbReference type="Gene3D" id="3.40.50.300">
    <property type="entry name" value="P-loop containing nucleotide triphosphate hydrolases"/>
    <property type="match status" value="1"/>
</dbReference>
<dbReference type="InterPro" id="IPR003593">
    <property type="entry name" value="AAA+_ATPase"/>
</dbReference>
<dbReference type="InterPro" id="IPR031327">
    <property type="entry name" value="MCM"/>
</dbReference>
<dbReference type="InterPro" id="IPR001208">
    <property type="entry name" value="MCM_dom"/>
</dbReference>
<dbReference type="InterPro" id="IPR041562">
    <property type="entry name" value="MCM_lid"/>
</dbReference>
<dbReference type="InterPro" id="IPR033762">
    <property type="entry name" value="MCM_OB"/>
</dbReference>
<dbReference type="InterPro" id="IPR012340">
    <property type="entry name" value="NA-bd_OB-fold"/>
</dbReference>
<dbReference type="InterPro" id="IPR027417">
    <property type="entry name" value="P-loop_NTPase"/>
</dbReference>
<dbReference type="PANTHER" id="PTHR11630:SF48">
    <property type="entry name" value="DNA HELICASE MCM9"/>
    <property type="match status" value="1"/>
</dbReference>
<dbReference type="PANTHER" id="PTHR11630">
    <property type="entry name" value="DNA REPLICATION LICENSING FACTOR MCM FAMILY MEMBER"/>
    <property type="match status" value="1"/>
</dbReference>
<dbReference type="Pfam" id="PF00493">
    <property type="entry name" value="MCM"/>
    <property type="match status" value="1"/>
</dbReference>
<dbReference type="Pfam" id="PF17855">
    <property type="entry name" value="MCM_lid"/>
    <property type="match status" value="1"/>
</dbReference>
<dbReference type="Pfam" id="PF17207">
    <property type="entry name" value="MCM_OB"/>
    <property type="match status" value="1"/>
</dbReference>
<dbReference type="PRINTS" id="PR01657">
    <property type="entry name" value="MCMFAMILY"/>
</dbReference>
<dbReference type="SMART" id="SM00382">
    <property type="entry name" value="AAA"/>
    <property type="match status" value="1"/>
</dbReference>
<dbReference type="SMART" id="SM00350">
    <property type="entry name" value="MCM"/>
    <property type="match status" value="1"/>
</dbReference>
<dbReference type="SUPFAM" id="SSF50249">
    <property type="entry name" value="Nucleic acid-binding proteins"/>
    <property type="match status" value="1"/>
</dbReference>
<dbReference type="SUPFAM" id="SSF52540">
    <property type="entry name" value="P-loop containing nucleoside triphosphate hydrolases"/>
    <property type="match status" value="1"/>
</dbReference>
<dbReference type="PROSITE" id="PS50051">
    <property type="entry name" value="MCM_2"/>
    <property type="match status" value="1"/>
</dbReference>
<organism>
    <name type="scientific">Mus musculus</name>
    <name type="common">Mouse</name>
    <dbReference type="NCBI Taxonomy" id="10090"/>
    <lineage>
        <taxon>Eukaryota</taxon>
        <taxon>Metazoa</taxon>
        <taxon>Chordata</taxon>
        <taxon>Craniata</taxon>
        <taxon>Vertebrata</taxon>
        <taxon>Euteleostomi</taxon>
        <taxon>Mammalia</taxon>
        <taxon>Eutheria</taxon>
        <taxon>Euarchontoglires</taxon>
        <taxon>Glires</taxon>
        <taxon>Rodentia</taxon>
        <taxon>Myomorpha</taxon>
        <taxon>Muroidea</taxon>
        <taxon>Muridae</taxon>
        <taxon>Murinae</taxon>
        <taxon>Mus</taxon>
        <taxon>Mus</taxon>
    </lineage>
</organism>
<feature type="chain" id="PRO_0000304144" description="DNA helicase MCM9">
    <location>
        <begin position="1"/>
        <end position="1134"/>
    </location>
</feature>
<feature type="domain" description="MCM">
    <location>
        <begin position="300"/>
        <end position="505"/>
    </location>
</feature>
<feature type="region of interest" description="Disordered" evidence="3">
    <location>
        <begin position="659"/>
        <end position="1101"/>
    </location>
</feature>
<feature type="compositionally biased region" description="Polar residues" evidence="3">
    <location>
        <begin position="688"/>
        <end position="704"/>
    </location>
</feature>
<feature type="compositionally biased region" description="Polar residues" evidence="3">
    <location>
        <begin position="751"/>
        <end position="773"/>
    </location>
</feature>
<feature type="compositionally biased region" description="Low complexity" evidence="3">
    <location>
        <begin position="861"/>
        <end position="872"/>
    </location>
</feature>
<feature type="compositionally biased region" description="Basic residues" evidence="3">
    <location>
        <begin position="876"/>
        <end position="885"/>
    </location>
</feature>
<feature type="compositionally biased region" description="Basic and acidic residues" evidence="3">
    <location>
        <begin position="964"/>
        <end position="977"/>
    </location>
</feature>
<feature type="compositionally biased region" description="Basic and acidic residues" evidence="3">
    <location>
        <begin position="985"/>
        <end position="994"/>
    </location>
</feature>
<feature type="compositionally biased region" description="Basic and acidic residues" evidence="3">
    <location>
        <begin position="1014"/>
        <end position="1023"/>
    </location>
</feature>
<feature type="compositionally biased region" description="Basic and acidic residues" evidence="3">
    <location>
        <begin position="1052"/>
        <end position="1078"/>
    </location>
</feature>
<feature type="compositionally biased region" description="Low complexity" evidence="3">
    <location>
        <begin position="1090"/>
        <end position="1099"/>
    </location>
</feature>
<feature type="binding site" evidence="2">
    <location>
        <begin position="352"/>
        <end position="359"/>
    </location>
    <ligand>
        <name>ATP</name>
        <dbReference type="ChEBI" id="CHEBI:30616"/>
    </ligand>
</feature>
<feature type="modified residue" description="Phosphoserine" evidence="1">
    <location>
        <position position="754"/>
    </location>
</feature>
<feature type="modified residue" description="Phosphoserine" evidence="1">
    <location>
        <position position="795"/>
    </location>
</feature>
<feature type="splice variant" id="VSP_028015" description="In isoform 2." evidence="9">
    <original>M</original>
    <variation>MDQRTTRNGKYCDVEPVSRSNPAPCLRDPPLRRLVRPKPRLQLPESRLSPCSRLPLADSSVRPGARPPASAPGRSPSGRKVEAVRGSGSAGSSSPSEAEREQREEACAPPRKAAPSSGRAHAPPPPTPRGSGWGDHGRSAVPATKTVRVEPYPPFKM</variation>
    <location>
        <position position="1"/>
    </location>
</feature>
<feature type="splice variant" id="VSP_028016" description="In isoform 3." evidence="9">
    <original>LT</original>
    <variation>TV</variation>
    <location>
        <begin position="385"/>
        <end position="386"/>
    </location>
</feature>
<feature type="splice variant" id="VSP_028017" description="In isoform 3." evidence="9">
    <location>
        <begin position="387"/>
        <end position="1134"/>
    </location>
</feature>
<feature type="sequence conflict" description="In Ref. 3; BAB31238." evidence="9" ref="3">
    <original>K</original>
    <variation>R</variation>
    <location>
        <position position="137"/>
    </location>
</feature>
<feature type="sequence conflict" description="In Ref. 2; AAH62185." evidence="9" ref="2">
    <original>S</original>
    <variation>T</variation>
    <location>
        <position position="875"/>
    </location>
</feature>
<feature type="sequence conflict" description="In Ref. 2; AAH62185." evidence="9" ref="2">
    <original>S</original>
    <variation>P</variation>
    <location>
        <position position="1050"/>
    </location>
</feature>
<feature type="sequence conflict" description="In Ref. 2; AAH62185." evidence="9" ref="2">
    <location>
        <begin position="1063"/>
        <end position="1065"/>
    </location>
</feature>
<accession>Q2KHI9</accession>
<accession>Q3V370</accession>
<accession>Q6P6J6</accession>
<accession>Q9D344</accession>
<keyword id="KW-0025">Alternative splicing</keyword>
<keyword id="KW-0067">ATP-binding</keyword>
<keyword id="KW-0158">Chromosome</keyword>
<keyword id="KW-0227">DNA damage</keyword>
<keyword id="KW-0234">DNA repair</keyword>
<keyword id="KW-0238">DNA-binding</keyword>
<keyword id="KW-0347">Helicase</keyword>
<keyword id="KW-0378">Hydrolase</keyword>
<keyword id="KW-0547">Nucleotide-binding</keyword>
<keyword id="KW-0539">Nucleus</keyword>
<keyword id="KW-0597">Phosphoprotein</keyword>
<keyword id="KW-1185">Reference proteome</keyword>